<gene>
    <name evidence="1" type="primary">queE</name>
    <name type="ordered locus">Mhun_2832</name>
</gene>
<evidence type="ECO:0000255" key="1">
    <source>
        <dbReference type="HAMAP-Rule" id="MF_00917"/>
    </source>
</evidence>
<evidence type="ECO:0000255" key="2">
    <source>
        <dbReference type="PROSITE-ProRule" id="PRU01266"/>
    </source>
</evidence>
<evidence type="ECO:0000256" key="3">
    <source>
        <dbReference type="SAM" id="MobiDB-lite"/>
    </source>
</evidence>
<name>QUEE_METHJ</name>
<organism>
    <name type="scientific">Methanospirillum hungatei JF-1 (strain ATCC 27890 / DSM 864 / NBRC 100397 / JF-1)</name>
    <dbReference type="NCBI Taxonomy" id="323259"/>
    <lineage>
        <taxon>Archaea</taxon>
        <taxon>Methanobacteriati</taxon>
        <taxon>Methanobacteriota</taxon>
        <taxon>Stenosarchaea group</taxon>
        <taxon>Methanomicrobia</taxon>
        <taxon>Methanomicrobiales</taxon>
        <taxon>Methanospirillaceae</taxon>
        <taxon>Methanospirillum</taxon>
    </lineage>
</organism>
<comment type="function">
    <text evidence="1">Catalyzes the complex heterocyclic radical-mediated conversion of 6-carboxy-5,6,7,8-tetrahydropterin (CPH4) to 7-carboxy-7-deazaguanine (CDG), a step common to the biosynthetic pathways of all 7-deazapurine-containing compounds.</text>
</comment>
<comment type="catalytic activity">
    <reaction evidence="1">
        <text>6-carboxy-5,6,7,8-tetrahydropterin + H(+) = 7-carboxy-7-deazaguanine + NH4(+)</text>
        <dbReference type="Rhea" id="RHEA:27974"/>
        <dbReference type="ChEBI" id="CHEBI:15378"/>
        <dbReference type="ChEBI" id="CHEBI:28938"/>
        <dbReference type="ChEBI" id="CHEBI:61032"/>
        <dbReference type="ChEBI" id="CHEBI:61036"/>
        <dbReference type="EC" id="4.3.99.3"/>
    </reaction>
</comment>
<comment type="cofactor">
    <cofactor evidence="1">
        <name>[4Fe-4S] cluster</name>
        <dbReference type="ChEBI" id="CHEBI:49883"/>
    </cofactor>
    <text evidence="1">Binds 1 [4Fe-4S] cluster. The cluster is coordinated with 3 cysteines and an exchangeable S-adenosyl-L-methionine.</text>
</comment>
<comment type="cofactor">
    <cofactor evidence="1">
        <name>S-adenosyl-L-methionine</name>
        <dbReference type="ChEBI" id="CHEBI:59789"/>
    </cofactor>
    <text evidence="1">Binds 1 S-adenosyl-L-methionine per subunit.</text>
</comment>
<comment type="cofactor">
    <cofactor evidence="1">
        <name>Mg(2+)</name>
        <dbReference type="ChEBI" id="CHEBI:18420"/>
    </cofactor>
</comment>
<comment type="pathway">
    <text evidence="1">Purine metabolism; 7-cyano-7-deazaguanine biosynthesis.</text>
</comment>
<comment type="subunit">
    <text evidence="1">Homodimer.</text>
</comment>
<comment type="similarity">
    <text evidence="1">Belongs to the radical SAM superfamily. 7-carboxy-7-deazaguanine synthase family.</text>
</comment>
<accession>Q2FS67</accession>
<proteinExistence type="inferred from homology"/>
<sequence length="234" mass="25117">MPLNCDTKTAGEISSSIPSGSGSHQPAAQSSGMKIAEIFTSLQGEGLTSGYPTIFIRLAGCNLSCSYCDTPASRQGGMDMNVSEVVAGALLQKPHYVCITGGEPLLQKDEVAELARQLIKAGKMVSIETNGTVPFDDLPSDISICMDVKCPSSGEFSNINLLSDLKSTDSVKFVVGTDDDLQYAEKVIMSHPTKAEIFISPIYGTDYQRIASYILSRNLPARMQLQLHKFIGLP</sequence>
<reference key="1">
    <citation type="journal article" date="2016" name="Stand. Genomic Sci.">
        <title>Complete genome sequence of Methanospirillum hungatei type strain JF1.</title>
        <authorList>
            <person name="Gunsalus R.P."/>
            <person name="Cook L.E."/>
            <person name="Crable B."/>
            <person name="Rohlin L."/>
            <person name="McDonald E."/>
            <person name="Mouttaki H."/>
            <person name="Sieber J.R."/>
            <person name="Poweleit N."/>
            <person name="Zhou H."/>
            <person name="Lapidus A.L."/>
            <person name="Daligault H.E."/>
            <person name="Land M."/>
            <person name="Gilna P."/>
            <person name="Ivanova N."/>
            <person name="Kyrpides N."/>
            <person name="Culley D.E."/>
            <person name="McInerney M.J."/>
        </authorList>
    </citation>
    <scope>NUCLEOTIDE SEQUENCE [LARGE SCALE GENOMIC DNA]</scope>
    <source>
        <strain>ATCC 27890 / DSM 864 / NBRC 100397 / JF-1</strain>
    </source>
</reference>
<feature type="chain" id="PRO_0000416220" description="7-carboxy-7-deazaguanine synthase">
    <location>
        <begin position="1"/>
        <end position="234"/>
    </location>
</feature>
<feature type="domain" description="Radical SAM core" evidence="2">
    <location>
        <begin position="48"/>
        <end position="234"/>
    </location>
</feature>
<feature type="region of interest" description="Disordered" evidence="3">
    <location>
        <begin position="1"/>
        <end position="28"/>
    </location>
</feature>
<feature type="compositionally biased region" description="Low complexity" evidence="3">
    <location>
        <begin position="13"/>
        <end position="23"/>
    </location>
</feature>
<feature type="binding site" evidence="1">
    <location>
        <begin position="42"/>
        <end position="44"/>
    </location>
    <ligand>
        <name>substrate</name>
    </ligand>
</feature>
<feature type="binding site" evidence="1">
    <location>
        <position position="57"/>
    </location>
    <ligand>
        <name>substrate</name>
    </ligand>
</feature>
<feature type="binding site" evidence="1">
    <location>
        <position position="61"/>
    </location>
    <ligand>
        <name>[4Fe-4S] cluster</name>
        <dbReference type="ChEBI" id="CHEBI:49883"/>
        <note>4Fe-4S-S-AdoMet</note>
    </ligand>
</feature>
<feature type="binding site" evidence="1">
    <location>
        <position position="65"/>
    </location>
    <ligand>
        <name>[4Fe-4S] cluster</name>
        <dbReference type="ChEBI" id="CHEBI:49883"/>
        <note>4Fe-4S-S-AdoMet</note>
    </ligand>
</feature>
<feature type="binding site" evidence="1">
    <location>
        <position position="68"/>
    </location>
    <ligand>
        <name>[4Fe-4S] cluster</name>
        <dbReference type="ChEBI" id="CHEBI:49883"/>
        <note>4Fe-4S-S-AdoMet</note>
    </ligand>
</feature>
<feature type="binding site" evidence="1">
    <location>
        <position position="70"/>
    </location>
    <ligand>
        <name>Mg(2+)</name>
        <dbReference type="ChEBI" id="CHEBI:18420"/>
    </ligand>
</feature>
<feature type="binding site" evidence="1">
    <location>
        <position position="100"/>
    </location>
    <ligand>
        <name>substrate</name>
    </ligand>
</feature>
<feature type="binding site" evidence="1">
    <location>
        <position position="102"/>
    </location>
    <ligand>
        <name>S-adenosyl-L-methionine</name>
        <dbReference type="ChEBI" id="CHEBI:59789"/>
    </ligand>
</feature>
<feature type="binding site" evidence="1">
    <location>
        <position position="234"/>
    </location>
    <ligand>
        <name>substrate</name>
    </ligand>
</feature>
<protein>
    <recommendedName>
        <fullName evidence="1">7-carboxy-7-deazaguanine synthase</fullName>
        <shortName evidence="1">CDG synthase</shortName>
        <ecNumber evidence="1">4.3.99.3</ecNumber>
    </recommendedName>
    <alternativeName>
        <fullName evidence="1">Archaeosine biosynthesis protein QueE</fullName>
    </alternativeName>
</protein>
<keyword id="KW-0004">4Fe-4S</keyword>
<keyword id="KW-0408">Iron</keyword>
<keyword id="KW-0411">Iron-sulfur</keyword>
<keyword id="KW-0456">Lyase</keyword>
<keyword id="KW-0460">Magnesium</keyword>
<keyword id="KW-0479">Metal-binding</keyword>
<keyword id="KW-1185">Reference proteome</keyword>
<keyword id="KW-0949">S-adenosyl-L-methionine</keyword>
<dbReference type="EC" id="4.3.99.3" evidence="1"/>
<dbReference type="EMBL" id="CP000254">
    <property type="protein sequence ID" value="ABD42524.1"/>
    <property type="molecule type" value="Genomic_DNA"/>
</dbReference>
<dbReference type="RefSeq" id="WP_011449778.1">
    <property type="nucleotide sequence ID" value="NC_007796.1"/>
</dbReference>
<dbReference type="SMR" id="Q2FS67"/>
<dbReference type="STRING" id="323259.Mhun_2832"/>
<dbReference type="EnsemblBacteria" id="ABD42524">
    <property type="protein sequence ID" value="ABD42524"/>
    <property type="gene ID" value="Mhun_2832"/>
</dbReference>
<dbReference type="GeneID" id="3923101"/>
<dbReference type="KEGG" id="mhu:Mhun_2832"/>
<dbReference type="eggNOG" id="arCOG02173">
    <property type="taxonomic scope" value="Archaea"/>
</dbReference>
<dbReference type="HOGENOM" id="CLU_066739_2_3_2"/>
<dbReference type="InParanoid" id="Q2FS67"/>
<dbReference type="OrthoDB" id="7980at2157"/>
<dbReference type="UniPathway" id="UPA00391"/>
<dbReference type="Proteomes" id="UP000001941">
    <property type="component" value="Chromosome"/>
</dbReference>
<dbReference type="GO" id="GO:0051539">
    <property type="term" value="F:4 iron, 4 sulfur cluster binding"/>
    <property type="evidence" value="ECO:0007669"/>
    <property type="project" value="UniProtKB-UniRule"/>
</dbReference>
<dbReference type="GO" id="GO:0016840">
    <property type="term" value="F:carbon-nitrogen lyase activity"/>
    <property type="evidence" value="ECO:0007669"/>
    <property type="project" value="UniProtKB-UniRule"/>
</dbReference>
<dbReference type="GO" id="GO:0000287">
    <property type="term" value="F:magnesium ion binding"/>
    <property type="evidence" value="ECO:0007669"/>
    <property type="project" value="UniProtKB-UniRule"/>
</dbReference>
<dbReference type="GO" id="GO:1904047">
    <property type="term" value="F:S-adenosyl-L-methionine binding"/>
    <property type="evidence" value="ECO:0007669"/>
    <property type="project" value="UniProtKB-UniRule"/>
</dbReference>
<dbReference type="CDD" id="cd01335">
    <property type="entry name" value="Radical_SAM"/>
    <property type="match status" value="1"/>
</dbReference>
<dbReference type="Gene3D" id="3.20.20.70">
    <property type="entry name" value="Aldolase class I"/>
    <property type="match status" value="1"/>
</dbReference>
<dbReference type="HAMAP" id="MF_00917">
    <property type="entry name" value="QueE"/>
    <property type="match status" value="1"/>
</dbReference>
<dbReference type="InterPro" id="IPR024924">
    <property type="entry name" value="7-CO-7-deazaguanine_synth-like"/>
</dbReference>
<dbReference type="InterPro" id="IPR013785">
    <property type="entry name" value="Aldolase_TIM"/>
</dbReference>
<dbReference type="InterPro" id="IPR007197">
    <property type="entry name" value="rSAM"/>
</dbReference>
<dbReference type="PANTHER" id="PTHR42836">
    <property type="entry name" value="7-CARBOXY-7-DEAZAGUANINE SYNTHASE"/>
    <property type="match status" value="1"/>
</dbReference>
<dbReference type="PANTHER" id="PTHR42836:SF1">
    <property type="entry name" value="7-CARBOXY-7-DEAZAGUANINE SYNTHASE"/>
    <property type="match status" value="1"/>
</dbReference>
<dbReference type="Pfam" id="PF13353">
    <property type="entry name" value="Fer4_12"/>
    <property type="match status" value="1"/>
</dbReference>
<dbReference type="Pfam" id="PF04055">
    <property type="entry name" value="Radical_SAM"/>
    <property type="match status" value="1"/>
</dbReference>
<dbReference type="PIRSF" id="PIRSF000370">
    <property type="entry name" value="QueE"/>
    <property type="match status" value="1"/>
</dbReference>
<dbReference type="SFLD" id="SFLDS00029">
    <property type="entry name" value="Radical_SAM"/>
    <property type="match status" value="1"/>
</dbReference>
<dbReference type="SUPFAM" id="SSF102114">
    <property type="entry name" value="Radical SAM enzymes"/>
    <property type="match status" value="1"/>
</dbReference>
<dbReference type="PROSITE" id="PS51918">
    <property type="entry name" value="RADICAL_SAM"/>
    <property type="match status" value="1"/>
</dbReference>